<organism>
    <name type="scientific">Dictyostelium discoideum</name>
    <name type="common">Social amoeba</name>
    <dbReference type="NCBI Taxonomy" id="44689"/>
    <lineage>
        <taxon>Eukaryota</taxon>
        <taxon>Amoebozoa</taxon>
        <taxon>Evosea</taxon>
        <taxon>Eumycetozoa</taxon>
        <taxon>Dictyostelia</taxon>
        <taxon>Dictyosteliales</taxon>
        <taxon>Dictyosteliaceae</taxon>
        <taxon>Dictyostelium</taxon>
    </lineage>
</organism>
<comment type="catalytic activity">
    <reaction>
        <text>D-glyceraldehyde 3-phosphate = dihydroxyacetone phosphate</text>
        <dbReference type="Rhea" id="RHEA:18585"/>
        <dbReference type="ChEBI" id="CHEBI:57642"/>
        <dbReference type="ChEBI" id="CHEBI:59776"/>
        <dbReference type="EC" id="5.3.1.1"/>
    </reaction>
</comment>
<comment type="pathway">
    <text>Carbohydrate biosynthesis; gluconeogenesis.</text>
</comment>
<comment type="pathway">
    <text>Carbohydrate degradation; glycolysis; D-glyceraldehyde 3-phosphate from glycerone phosphate: step 1/1.</text>
</comment>
<comment type="subunit">
    <text evidence="1">Homodimer.</text>
</comment>
<comment type="similarity">
    <text evidence="2">Belongs to the triosephosphate isomerase family.</text>
</comment>
<name>TPIS_DICDI</name>
<sequence length="257" mass="28240">MTGTRTFFVGGNHKMNGSKSMLESLSKGMNESVENKENVDIFIAPSYPYLEFLSNKLDNKKFKVCSQNCYSVAKGAFTGEISANMLVDLGIPYVIIGHSERRNVFSESSELITKKTKYAISLGLTVILCLGELLADRKSNNTEHILSEQLKDFASFTPEEWSKIVIAYEPVWAIGTGAVATPQEAQDTHVFIRKWISEKVSEDVAKKTSIMYGGSVNADNCHNLSKQSDIDGFLVGGASLVASDFIAIIKSAVPKKY</sequence>
<dbReference type="EC" id="5.3.1.1"/>
<dbReference type="EMBL" id="AAFI02000012">
    <property type="protein sequence ID" value="EAL70128.1"/>
    <property type="molecule type" value="Genomic_DNA"/>
</dbReference>
<dbReference type="RefSeq" id="XP_644150.1">
    <property type="nucleotide sequence ID" value="XM_639058.1"/>
</dbReference>
<dbReference type="SMR" id="Q869R8"/>
<dbReference type="FunCoup" id="Q869R8">
    <property type="interactions" value="504"/>
</dbReference>
<dbReference type="STRING" id="44689.Q869R8"/>
<dbReference type="PaxDb" id="44689-DDB0231425"/>
<dbReference type="EnsemblProtists" id="EAL70128">
    <property type="protein sequence ID" value="EAL70128"/>
    <property type="gene ID" value="DDB_G0274471"/>
</dbReference>
<dbReference type="GeneID" id="8619579"/>
<dbReference type="KEGG" id="ddi:DDB_G0274471"/>
<dbReference type="dictyBase" id="DDB_G0274471">
    <property type="gene designation" value="tpiA"/>
</dbReference>
<dbReference type="VEuPathDB" id="AmoebaDB:DDB_G0274471"/>
<dbReference type="eggNOG" id="KOG1643">
    <property type="taxonomic scope" value="Eukaryota"/>
</dbReference>
<dbReference type="HOGENOM" id="CLU_024251_2_0_1"/>
<dbReference type="InParanoid" id="Q869R8"/>
<dbReference type="OMA" id="IEKNGTM"/>
<dbReference type="PhylomeDB" id="Q869R8"/>
<dbReference type="Reactome" id="R-DDI-70171">
    <property type="pathway name" value="Glycolysis"/>
</dbReference>
<dbReference type="Reactome" id="R-DDI-70263">
    <property type="pathway name" value="Gluconeogenesis"/>
</dbReference>
<dbReference type="UniPathway" id="UPA00109">
    <property type="reaction ID" value="UER00189"/>
</dbReference>
<dbReference type="UniPathway" id="UPA00138"/>
<dbReference type="PRO" id="PR:Q869R8"/>
<dbReference type="Proteomes" id="UP000002195">
    <property type="component" value="Chromosome 2"/>
</dbReference>
<dbReference type="GO" id="GO:0005829">
    <property type="term" value="C:cytosol"/>
    <property type="evidence" value="ECO:0000318"/>
    <property type="project" value="GO_Central"/>
</dbReference>
<dbReference type="GO" id="GO:0004807">
    <property type="term" value="F:triose-phosphate isomerase activity"/>
    <property type="evidence" value="ECO:0000250"/>
    <property type="project" value="dictyBase"/>
</dbReference>
<dbReference type="GO" id="GO:0006094">
    <property type="term" value="P:gluconeogenesis"/>
    <property type="evidence" value="ECO:0000318"/>
    <property type="project" value="GO_Central"/>
</dbReference>
<dbReference type="GO" id="GO:0046166">
    <property type="term" value="P:glyceraldehyde-3-phosphate biosynthetic process"/>
    <property type="evidence" value="ECO:0000318"/>
    <property type="project" value="GO_Central"/>
</dbReference>
<dbReference type="GO" id="GO:0019563">
    <property type="term" value="P:glycerol catabolic process"/>
    <property type="evidence" value="ECO:0000318"/>
    <property type="project" value="GO_Central"/>
</dbReference>
<dbReference type="GO" id="GO:0006096">
    <property type="term" value="P:glycolytic process"/>
    <property type="evidence" value="ECO:0000250"/>
    <property type="project" value="dictyBase"/>
</dbReference>
<dbReference type="CDD" id="cd00311">
    <property type="entry name" value="TIM"/>
    <property type="match status" value="1"/>
</dbReference>
<dbReference type="FunFam" id="3.20.20.70:FF:000020">
    <property type="entry name" value="Triosephosphate isomerase"/>
    <property type="match status" value="1"/>
</dbReference>
<dbReference type="Gene3D" id="3.20.20.70">
    <property type="entry name" value="Aldolase class I"/>
    <property type="match status" value="1"/>
</dbReference>
<dbReference type="HAMAP" id="MF_00147_B">
    <property type="entry name" value="TIM_B"/>
    <property type="match status" value="1"/>
</dbReference>
<dbReference type="InterPro" id="IPR013785">
    <property type="entry name" value="Aldolase_TIM"/>
</dbReference>
<dbReference type="InterPro" id="IPR035990">
    <property type="entry name" value="TIM_sf"/>
</dbReference>
<dbReference type="InterPro" id="IPR022896">
    <property type="entry name" value="TrioseP_Isoase_bac/euk"/>
</dbReference>
<dbReference type="InterPro" id="IPR000652">
    <property type="entry name" value="Triosephosphate_isomerase"/>
</dbReference>
<dbReference type="InterPro" id="IPR020861">
    <property type="entry name" value="Triosephosphate_isomerase_AS"/>
</dbReference>
<dbReference type="NCBIfam" id="TIGR00419">
    <property type="entry name" value="tim"/>
    <property type="match status" value="1"/>
</dbReference>
<dbReference type="PANTHER" id="PTHR21139">
    <property type="entry name" value="TRIOSEPHOSPHATE ISOMERASE"/>
    <property type="match status" value="1"/>
</dbReference>
<dbReference type="PANTHER" id="PTHR21139:SF2">
    <property type="entry name" value="TRIOSEPHOSPHATE ISOMERASE"/>
    <property type="match status" value="1"/>
</dbReference>
<dbReference type="Pfam" id="PF00121">
    <property type="entry name" value="TIM"/>
    <property type="match status" value="1"/>
</dbReference>
<dbReference type="SUPFAM" id="SSF51351">
    <property type="entry name" value="Triosephosphate isomerase (TIM)"/>
    <property type="match status" value="1"/>
</dbReference>
<dbReference type="PROSITE" id="PS00171">
    <property type="entry name" value="TIM_1"/>
    <property type="match status" value="1"/>
</dbReference>
<dbReference type="PROSITE" id="PS51440">
    <property type="entry name" value="TIM_2"/>
    <property type="match status" value="1"/>
</dbReference>
<protein>
    <recommendedName>
        <fullName>Triosephosphate isomerase</fullName>
        <shortName>TIM</shortName>
        <ecNumber>5.3.1.1</ecNumber>
    </recommendedName>
    <alternativeName>
        <fullName>Triose-phosphate isomerase</fullName>
    </alternativeName>
</protein>
<evidence type="ECO:0000250" key="1"/>
<evidence type="ECO:0000305" key="2"/>
<proteinExistence type="inferred from homology"/>
<feature type="chain" id="PRO_0000311885" description="Triosephosphate isomerase">
    <location>
        <begin position="1"/>
        <end position="257"/>
    </location>
</feature>
<feature type="active site" description="Electrophile" evidence="1">
    <location>
        <position position="98"/>
    </location>
</feature>
<feature type="active site" description="Proton acceptor" evidence="1">
    <location>
        <position position="169"/>
    </location>
</feature>
<feature type="binding site" evidence="1">
    <location>
        <position position="12"/>
    </location>
    <ligand>
        <name>substrate</name>
    </ligand>
</feature>
<feature type="binding site" evidence="1">
    <location>
        <position position="14"/>
    </location>
    <ligand>
        <name>substrate</name>
    </ligand>
</feature>
<keyword id="KW-0312">Gluconeogenesis</keyword>
<keyword id="KW-0324">Glycolysis</keyword>
<keyword id="KW-0413">Isomerase</keyword>
<keyword id="KW-1185">Reference proteome</keyword>
<reference key="1">
    <citation type="journal article" date="2002" name="Nature">
        <title>Sequence and analysis of chromosome 2 of Dictyostelium discoideum.</title>
        <authorList>
            <person name="Gloeckner G."/>
            <person name="Eichinger L."/>
            <person name="Szafranski K."/>
            <person name="Pachebat J.A."/>
            <person name="Bankier A.T."/>
            <person name="Dear P.H."/>
            <person name="Lehmann R."/>
            <person name="Baumgart C."/>
            <person name="Parra G."/>
            <person name="Abril J.F."/>
            <person name="Guigo R."/>
            <person name="Kumpf K."/>
            <person name="Tunggal B."/>
            <person name="Cox E.C."/>
            <person name="Quail M.A."/>
            <person name="Platzer M."/>
            <person name="Rosenthal A."/>
            <person name="Noegel A.A."/>
        </authorList>
    </citation>
    <scope>NUCLEOTIDE SEQUENCE [LARGE SCALE GENOMIC DNA]</scope>
    <source>
        <strain>AX4</strain>
    </source>
</reference>
<reference key="2">
    <citation type="journal article" date="2005" name="Nature">
        <title>The genome of the social amoeba Dictyostelium discoideum.</title>
        <authorList>
            <person name="Eichinger L."/>
            <person name="Pachebat J.A."/>
            <person name="Gloeckner G."/>
            <person name="Rajandream M.A."/>
            <person name="Sucgang R."/>
            <person name="Berriman M."/>
            <person name="Song J."/>
            <person name="Olsen R."/>
            <person name="Szafranski K."/>
            <person name="Xu Q."/>
            <person name="Tunggal B."/>
            <person name="Kummerfeld S."/>
            <person name="Madera M."/>
            <person name="Konfortov B.A."/>
            <person name="Rivero F."/>
            <person name="Bankier A.T."/>
            <person name="Lehmann R."/>
            <person name="Hamlin N."/>
            <person name="Davies R."/>
            <person name="Gaudet P."/>
            <person name="Fey P."/>
            <person name="Pilcher K."/>
            <person name="Chen G."/>
            <person name="Saunders D."/>
            <person name="Sodergren E.J."/>
            <person name="Davis P."/>
            <person name="Kerhornou A."/>
            <person name="Nie X."/>
            <person name="Hall N."/>
            <person name="Anjard C."/>
            <person name="Hemphill L."/>
            <person name="Bason N."/>
            <person name="Farbrother P."/>
            <person name="Desany B."/>
            <person name="Just E."/>
            <person name="Morio T."/>
            <person name="Rost R."/>
            <person name="Churcher C.M."/>
            <person name="Cooper J."/>
            <person name="Haydock S."/>
            <person name="van Driessche N."/>
            <person name="Cronin A."/>
            <person name="Goodhead I."/>
            <person name="Muzny D.M."/>
            <person name="Mourier T."/>
            <person name="Pain A."/>
            <person name="Lu M."/>
            <person name="Harper D."/>
            <person name="Lindsay R."/>
            <person name="Hauser H."/>
            <person name="James K.D."/>
            <person name="Quiles M."/>
            <person name="Madan Babu M."/>
            <person name="Saito T."/>
            <person name="Buchrieser C."/>
            <person name="Wardroper A."/>
            <person name="Felder M."/>
            <person name="Thangavelu M."/>
            <person name="Johnson D."/>
            <person name="Knights A."/>
            <person name="Loulseged H."/>
            <person name="Mungall K.L."/>
            <person name="Oliver K."/>
            <person name="Price C."/>
            <person name="Quail M.A."/>
            <person name="Urushihara H."/>
            <person name="Hernandez J."/>
            <person name="Rabbinowitsch E."/>
            <person name="Steffen D."/>
            <person name="Sanders M."/>
            <person name="Ma J."/>
            <person name="Kohara Y."/>
            <person name="Sharp S."/>
            <person name="Simmonds M.N."/>
            <person name="Spiegler S."/>
            <person name="Tivey A."/>
            <person name="Sugano S."/>
            <person name="White B."/>
            <person name="Walker D."/>
            <person name="Woodward J.R."/>
            <person name="Winckler T."/>
            <person name="Tanaka Y."/>
            <person name="Shaulsky G."/>
            <person name="Schleicher M."/>
            <person name="Weinstock G.M."/>
            <person name="Rosenthal A."/>
            <person name="Cox E.C."/>
            <person name="Chisholm R.L."/>
            <person name="Gibbs R.A."/>
            <person name="Loomis W.F."/>
            <person name="Platzer M."/>
            <person name="Kay R.R."/>
            <person name="Williams J.G."/>
            <person name="Dear P.H."/>
            <person name="Noegel A.A."/>
            <person name="Barrell B.G."/>
            <person name="Kuspa A."/>
        </authorList>
    </citation>
    <scope>NUCLEOTIDE SEQUENCE [LARGE SCALE GENOMIC DNA]</scope>
    <source>
        <strain>AX4</strain>
    </source>
</reference>
<accession>Q869R8</accession>
<accession>Q555C3</accession>
<gene>
    <name type="primary">tpiA</name>
    <name type="ORF">DDB_G0274471</name>
</gene>